<comment type="function">
    <text evidence="1">ATP-dependent RNA helicase involved in 40S ribosomal subunit biogenesis. Required for the processing and cleavage of 35S pre-rRNA at sites A0, A1, and A2, leading to mature 18S rRNA (By similarity).</text>
</comment>
<comment type="catalytic activity">
    <reaction>
        <text>ATP + H2O = ADP + phosphate + H(+)</text>
        <dbReference type="Rhea" id="RHEA:13065"/>
        <dbReference type="ChEBI" id="CHEBI:15377"/>
        <dbReference type="ChEBI" id="CHEBI:15378"/>
        <dbReference type="ChEBI" id="CHEBI:30616"/>
        <dbReference type="ChEBI" id="CHEBI:43474"/>
        <dbReference type="ChEBI" id="CHEBI:456216"/>
        <dbReference type="EC" id="3.6.4.13"/>
    </reaction>
</comment>
<comment type="subcellular location">
    <subcellularLocation>
        <location evidence="1">Nucleus</location>
        <location evidence="1">Nucleolus</location>
    </subcellularLocation>
</comment>
<comment type="domain">
    <text>The Q motif is unique to and characteristic of the DEAD box family of RNA helicases and controls ATP binding and hydrolysis.</text>
</comment>
<comment type="similarity">
    <text evidence="5">Belongs to the DEAD box helicase family. DDX48/FAL1 subfamily.</text>
</comment>
<protein>
    <recommendedName>
        <fullName>ATP-dependent RNA helicase fal1</fullName>
        <ecNumber>3.6.4.13</ecNumber>
    </recommendedName>
</protein>
<sequence length="394" mass="44706">MADEIMENVELTTSEDVNAVSSFEEMNLKEDLLRGIYAYGYETPSAVQSRAIIQICKGRDVIAQAQSGTGKTATFSIGILQSIDLSVRDTQALILSPTRELAVQIQNVVLALGDHMNVQCHACIGGTSVGNDIKKLDYGQHVVSGTPGRVTDMIRRRNLRTRNVKMLILDEADELLNQGFKEQIYDIYRYLPPGTQVVVVSATLPQDVLEMTNKFTTNPVRILVKRDELTLEGLKQYFIAVEKEEWKFDTLCDLYDTLTITQAVIFCNSRRKVDWLTEKMREANFTVTSMHGEMPQKERDAIMQDFRQGNSRVLICTDIWARGIDVQQVSLVINYDLPANRENYIHRIGRSGRFGRKGVAINFVTNEDVRILRDIEQYYSTVIDEMPMNIGDMV</sequence>
<reference key="1">
    <citation type="journal article" date="2002" name="Nature">
        <title>The genome sequence of Schizosaccharomyces pombe.</title>
        <authorList>
            <person name="Wood V."/>
            <person name="Gwilliam R."/>
            <person name="Rajandream M.A."/>
            <person name="Lyne M.H."/>
            <person name="Lyne R."/>
            <person name="Stewart A."/>
            <person name="Sgouros J.G."/>
            <person name="Peat N."/>
            <person name="Hayles J."/>
            <person name="Baker S.G."/>
            <person name="Basham D."/>
            <person name="Bowman S."/>
            <person name="Brooks K."/>
            <person name="Brown D."/>
            <person name="Brown S."/>
            <person name="Chillingworth T."/>
            <person name="Churcher C.M."/>
            <person name="Collins M."/>
            <person name="Connor R."/>
            <person name="Cronin A."/>
            <person name="Davis P."/>
            <person name="Feltwell T."/>
            <person name="Fraser A."/>
            <person name="Gentles S."/>
            <person name="Goble A."/>
            <person name="Hamlin N."/>
            <person name="Harris D.E."/>
            <person name="Hidalgo J."/>
            <person name="Hodgson G."/>
            <person name="Holroyd S."/>
            <person name="Hornsby T."/>
            <person name="Howarth S."/>
            <person name="Huckle E.J."/>
            <person name="Hunt S."/>
            <person name="Jagels K."/>
            <person name="James K.D."/>
            <person name="Jones L."/>
            <person name="Jones M."/>
            <person name="Leather S."/>
            <person name="McDonald S."/>
            <person name="McLean J."/>
            <person name="Mooney P."/>
            <person name="Moule S."/>
            <person name="Mungall K.L."/>
            <person name="Murphy L.D."/>
            <person name="Niblett D."/>
            <person name="Odell C."/>
            <person name="Oliver K."/>
            <person name="O'Neil S."/>
            <person name="Pearson D."/>
            <person name="Quail M.A."/>
            <person name="Rabbinowitsch E."/>
            <person name="Rutherford K.M."/>
            <person name="Rutter S."/>
            <person name="Saunders D."/>
            <person name="Seeger K."/>
            <person name="Sharp S."/>
            <person name="Skelton J."/>
            <person name="Simmonds M.N."/>
            <person name="Squares R."/>
            <person name="Squares S."/>
            <person name="Stevens K."/>
            <person name="Taylor K."/>
            <person name="Taylor R.G."/>
            <person name="Tivey A."/>
            <person name="Walsh S.V."/>
            <person name="Warren T."/>
            <person name="Whitehead S."/>
            <person name="Woodward J.R."/>
            <person name="Volckaert G."/>
            <person name="Aert R."/>
            <person name="Robben J."/>
            <person name="Grymonprez B."/>
            <person name="Weltjens I."/>
            <person name="Vanstreels E."/>
            <person name="Rieger M."/>
            <person name="Schaefer M."/>
            <person name="Mueller-Auer S."/>
            <person name="Gabel C."/>
            <person name="Fuchs M."/>
            <person name="Duesterhoeft A."/>
            <person name="Fritzc C."/>
            <person name="Holzer E."/>
            <person name="Moestl D."/>
            <person name="Hilbert H."/>
            <person name="Borzym K."/>
            <person name="Langer I."/>
            <person name="Beck A."/>
            <person name="Lehrach H."/>
            <person name="Reinhardt R."/>
            <person name="Pohl T.M."/>
            <person name="Eger P."/>
            <person name="Zimmermann W."/>
            <person name="Wedler H."/>
            <person name="Wambutt R."/>
            <person name="Purnelle B."/>
            <person name="Goffeau A."/>
            <person name="Cadieu E."/>
            <person name="Dreano S."/>
            <person name="Gloux S."/>
            <person name="Lelaure V."/>
            <person name="Mottier S."/>
            <person name="Galibert F."/>
            <person name="Aves S.J."/>
            <person name="Xiang Z."/>
            <person name="Hunt C."/>
            <person name="Moore K."/>
            <person name="Hurst S.M."/>
            <person name="Lucas M."/>
            <person name="Rochet M."/>
            <person name="Gaillardin C."/>
            <person name="Tallada V.A."/>
            <person name="Garzon A."/>
            <person name="Thode G."/>
            <person name="Daga R.R."/>
            <person name="Cruzado L."/>
            <person name="Jimenez J."/>
            <person name="Sanchez M."/>
            <person name="del Rey F."/>
            <person name="Benito J."/>
            <person name="Dominguez A."/>
            <person name="Revuelta J.L."/>
            <person name="Moreno S."/>
            <person name="Armstrong J."/>
            <person name="Forsburg S.L."/>
            <person name="Cerutti L."/>
            <person name="Lowe T."/>
            <person name="McCombie W.R."/>
            <person name="Paulsen I."/>
            <person name="Potashkin J."/>
            <person name="Shpakovski G.V."/>
            <person name="Ussery D."/>
            <person name="Barrell B.G."/>
            <person name="Nurse P."/>
        </authorList>
    </citation>
    <scope>NUCLEOTIDE SEQUENCE [LARGE SCALE GENOMIC DNA]</scope>
    <source>
        <strain>972 / ATCC 24843</strain>
    </source>
</reference>
<reference key="2">
    <citation type="journal article" date="2008" name="J. Proteome Res.">
        <title>Phosphoproteome analysis of fission yeast.</title>
        <authorList>
            <person name="Wilson-Grady J.T."/>
            <person name="Villen J."/>
            <person name="Gygi S.P."/>
        </authorList>
    </citation>
    <scope>PHOSPHORYLATION [LARGE SCALE ANALYSIS] AT SER-67</scope>
    <scope>IDENTIFICATION BY MASS SPECTROMETRY</scope>
</reference>
<evidence type="ECO:0000250" key="1"/>
<evidence type="ECO:0000255" key="2">
    <source>
        <dbReference type="PROSITE-ProRule" id="PRU00541"/>
    </source>
</evidence>
<evidence type="ECO:0000255" key="3">
    <source>
        <dbReference type="PROSITE-ProRule" id="PRU00542"/>
    </source>
</evidence>
<evidence type="ECO:0000269" key="4">
    <source>
    </source>
</evidence>
<evidence type="ECO:0000305" key="5"/>
<name>FAL1_SCHPO</name>
<dbReference type="EC" id="3.6.4.13"/>
<dbReference type="EMBL" id="CU329670">
    <property type="protein sequence ID" value="CAA92238.1"/>
    <property type="molecule type" value="Genomic_DNA"/>
</dbReference>
<dbReference type="PIR" id="T38085">
    <property type="entry name" value="T38085"/>
</dbReference>
<dbReference type="RefSeq" id="NP_592863.1">
    <property type="nucleotide sequence ID" value="NM_001018263.2"/>
</dbReference>
<dbReference type="SMR" id="Q10055"/>
<dbReference type="BioGRID" id="278099">
    <property type="interactions" value="6"/>
</dbReference>
<dbReference type="FunCoup" id="Q10055">
    <property type="interactions" value="514"/>
</dbReference>
<dbReference type="STRING" id="284812.Q10055"/>
<dbReference type="iPTMnet" id="Q10055"/>
<dbReference type="SwissPalm" id="Q10055"/>
<dbReference type="PaxDb" id="4896-SPAC1F5.10.1"/>
<dbReference type="EnsemblFungi" id="SPAC1F5.10.1">
    <property type="protein sequence ID" value="SPAC1F5.10.1:pep"/>
    <property type="gene ID" value="SPAC1F5.10"/>
</dbReference>
<dbReference type="GeneID" id="2541602"/>
<dbReference type="KEGG" id="spo:2541602"/>
<dbReference type="PomBase" id="SPAC1F5.10"/>
<dbReference type="VEuPathDB" id="FungiDB:SPAC1F5.10"/>
<dbReference type="eggNOG" id="KOG0328">
    <property type="taxonomic scope" value="Eukaryota"/>
</dbReference>
<dbReference type="HOGENOM" id="CLU_003041_1_0_1"/>
<dbReference type="InParanoid" id="Q10055"/>
<dbReference type="OMA" id="TRFHDFK"/>
<dbReference type="PhylomeDB" id="Q10055"/>
<dbReference type="Reactome" id="R-SPO-159236">
    <property type="pathway name" value="Transport of Mature mRNA derived from an Intron-Containing Transcript"/>
</dbReference>
<dbReference type="Reactome" id="R-SPO-72163">
    <property type="pathway name" value="mRNA Splicing - Major Pathway"/>
</dbReference>
<dbReference type="Reactome" id="R-SPO-975957">
    <property type="pathway name" value="Nonsense Mediated Decay (NMD) enhanced by the Exon Junction Complex (EJC)"/>
</dbReference>
<dbReference type="PRO" id="PR:Q10055"/>
<dbReference type="Proteomes" id="UP000002485">
    <property type="component" value="Chromosome I"/>
</dbReference>
<dbReference type="GO" id="GO:0071013">
    <property type="term" value="C:catalytic step 2 spliceosome"/>
    <property type="evidence" value="ECO:0000318"/>
    <property type="project" value="GO_Central"/>
</dbReference>
<dbReference type="GO" id="GO:0000785">
    <property type="term" value="C:chromatin"/>
    <property type="evidence" value="ECO:0000314"/>
    <property type="project" value="PomBase"/>
</dbReference>
<dbReference type="GO" id="GO:0005829">
    <property type="term" value="C:cytosol"/>
    <property type="evidence" value="ECO:0007005"/>
    <property type="project" value="PomBase"/>
</dbReference>
<dbReference type="GO" id="GO:0035145">
    <property type="term" value="C:exon-exon junction complex"/>
    <property type="evidence" value="ECO:0000269"/>
    <property type="project" value="PomBase"/>
</dbReference>
<dbReference type="GO" id="GO:0030874">
    <property type="term" value="C:nucleolar chromatin"/>
    <property type="evidence" value="ECO:0000314"/>
    <property type="project" value="PomBase"/>
</dbReference>
<dbReference type="GO" id="GO:0005730">
    <property type="term" value="C:nucleolus"/>
    <property type="evidence" value="ECO:0000318"/>
    <property type="project" value="GO_Central"/>
</dbReference>
<dbReference type="GO" id="GO:0005634">
    <property type="term" value="C:nucleus"/>
    <property type="evidence" value="ECO:0007005"/>
    <property type="project" value="PomBase"/>
</dbReference>
<dbReference type="GO" id="GO:0005524">
    <property type="term" value="F:ATP binding"/>
    <property type="evidence" value="ECO:0007669"/>
    <property type="project" value="UniProtKB-KW"/>
</dbReference>
<dbReference type="GO" id="GO:0016887">
    <property type="term" value="F:ATP hydrolysis activity"/>
    <property type="evidence" value="ECO:0007669"/>
    <property type="project" value="RHEA"/>
</dbReference>
<dbReference type="GO" id="GO:0003729">
    <property type="term" value="F:mRNA binding"/>
    <property type="evidence" value="ECO:0000269"/>
    <property type="project" value="PomBase"/>
</dbReference>
<dbReference type="GO" id="GO:0003724">
    <property type="term" value="F:RNA helicase activity"/>
    <property type="evidence" value="ECO:0000318"/>
    <property type="project" value="GO_Central"/>
</dbReference>
<dbReference type="GO" id="GO:0000398">
    <property type="term" value="P:mRNA splicing, via spliceosome"/>
    <property type="evidence" value="ECO:0000318"/>
    <property type="project" value="GO_Central"/>
</dbReference>
<dbReference type="GO" id="GO:0071030">
    <property type="term" value="P:nuclear mRNA surveillance of spliceosomal pre-mRNA splicing"/>
    <property type="evidence" value="ECO:0000269"/>
    <property type="project" value="PomBase"/>
</dbReference>
<dbReference type="GO" id="GO:0006364">
    <property type="term" value="P:rRNA processing"/>
    <property type="evidence" value="ECO:0000266"/>
    <property type="project" value="PomBase"/>
</dbReference>
<dbReference type="CDD" id="cd18045">
    <property type="entry name" value="DEADc_EIF4AIII_DDX48"/>
    <property type="match status" value="1"/>
</dbReference>
<dbReference type="CDD" id="cd18787">
    <property type="entry name" value="SF2_C_DEAD"/>
    <property type="match status" value="1"/>
</dbReference>
<dbReference type="FunFam" id="3.40.50.300:FF:000031">
    <property type="entry name" value="Eukaryotic initiation factor 4A-III"/>
    <property type="match status" value="1"/>
</dbReference>
<dbReference type="FunFam" id="3.40.50.300:FF:000498">
    <property type="entry name" value="Eukaryotic initiation factor 4A-III"/>
    <property type="match status" value="1"/>
</dbReference>
<dbReference type="Gene3D" id="3.40.50.300">
    <property type="entry name" value="P-loop containing nucleotide triphosphate hydrolases"/>
    <property type="match status" value="2"/>
</dbReference>
<dbReference type="InterPro" id="IPR011545">
    <property type="entry name" value="DEAD/DEAH_box_helicase_dom"/>
</dbReference>
<dbReference type="InterPro" id="IPR014001">
    <property type="entry name" value="Helicase_ATP-bd"/>
</dbReference>
<dbReference type="InterPro" id="IPR001650">
    <property type="entry name" value="Helicase_C-like"/>
</dbReference>
<dbReference type="InterPro" id="IPR027417">
    <property type="entry name" value="P-loop_NTPase"/>
</dbReference>
<dbReference type="InterPro" id="IPR000629">
    <property type="entry name" value="RNA-helicase_DEAD-box_CS"/>
</dbReference>
<dbReference type="InterPro" id="IPR014014">
    <property type="entry name" value="RNA_helicase_DEAD_Q_motif"/>
</dbReference>
<dbReference type="PANTHER" id="PTHR47958">
    <property type="entry name" value="ATP-DEPENDENT RNA HELICASE DBP3"/>
    <property type="match status" value="1"/>
</dbReference>
<dbReference type="Pfam" id="PF00270">
    <property type="entry name" value="DEAD"/>
    <property type="match status" value="1"/>
</dbReference>
<dbReference type="Pfam" id="PF00271">
    <property type="entry name" value="Helicase_C"/>
    <property type="match status" value="1"/>
</dbReference>
<dbReference type="SMART" id="SM00487">
    <property type="entry name" value="DEXDc"/>
    <property type="match status" value="1"/>
</dbReference>
<dbReference type="SMART" id="SM00490">
    <property type="entry name" value="HELICc"/>
    <property type="match status" value="1"/>
</dbReference>
<dbReference type="SUPFAM" id="SSF52540">
    <property type="entry name" value="P-loop containing nucleoside triphosphate hydrolases"/>
    <property type="match status" value="1"/>
</dbReference>
<dbReference type="PROSITE" id="PS00039">
    <property type="entry name" value="DEAD_ATP_HELICASE"/>
    <property type="match status" value="1"/>
</dbReference>
<dbReference type="PROSITE" id="PS51192">
    <property type="entry name" value="HELICASE_ATP_BIND_1"/>
    <property type="match status" value="1"/>
</dbReference>
<dbReference type="PROSITE" id="PS51194">
    <property type="entry name" value="HELICASE_CTER"/>
    <property type="match status" value="1"/>
</dbReference>
<dbReference type="PROSITE" id="PS51195">
    <property type="entry name" value="Q_MOTIF"/>
    <property type="match status" value="1"/>
</dbReference>
<keyword id="KW-0067">ATP-binding</keyword>
<keyword id="KW-0347">Helicase</keyword>
<keyword id="KW-0378">Hydrolase</keyword>
<keyword id="KW-0547">Nucleotide-binding</keyword>
<keyword id="KW-0539">Nucleus</keyword>
<keyword id="KW-0597">Phosphoprotein</keyword>
<keyword id="KW-1185">Reference proteome</keyword>
<keyword id="KW-0690">Ribosome biogenesis</keyword>
<keyword id="KW-0694">RNA-binding</keyword>
<keyword id="KW-0698">rRNA processing</keyword>
<proteinExistence type="evidence at protein level"/>
<organism>
    <name type="scientific">Schizosaccharomyces pombe (strain 972 / ATCC 24843)</name>
    <name type="common">Fission yeast</name>
    <dbReference type="NCBI Taxonomy" id="284812"/>
    <lineage>
        <taxon>Eukaryota</taxon>
        <taxon>Fungi</taxon>
        <taxon>Dikarya</taxon>
        <taxon>Ascomycota</taxon>
        <taxon>Taphrinomycotina</taxon>
        <taxon>Schizosaccharomycetes</taxon>
        <taxon>Schizosaccharomycetales</taxon>
        <taxon>Schizosaccharomycetaceae</taxon>
        <taxon>Schizosaccharomyces</taxon>
    </lineage>
</organism>
<feature type="chain" id="PRO_0000054967" description="ATP-dependent RNA helicase fal1">
    <location>
        <begin position="1"/>
        <end position="394"/>
    </location>
</feature>
<feature type="domain" description="Helicase ATP-binding" evidence="2">
    <location>
        <begin position="52"/>
        <end position="222"/>
    </location>
</feature>
<feature type="domain" description="Helicase C-terminal" evidence="3">
    <location>
        <begin position="233"/>
        <end position="394"/>
    </location>
</feature>
<feature type="short sequence motif" description="Q motif">
    <location>
        <begin position="21"/>
        <end position="49"/>
    </location>
</feature>
<feature type="short sequence motif" description="DEAD box">
    <location>
        <begin position="170"/>
        <end position="173"/>
    </location>
</feature>
<feature type="binding site" evidence="2">
    <location>
        <begin position="65"/>
        <end position="72"/>
    </location>
    <ligand>
        <name>ATP</name>
        <dbReference type="ChEBI" id="CHEBI:30616"/>
    </ligand>
</feature>
<feature type="modified residue" description="Phosphoserine" evidence="4">
    <location>
        <position position="67"/>
    </location>
</feature>
<accession>Q10055</accession>
<gene>
    <name type="primary">tif412</name>
    <name type="synonym">fal1</name>
    <name type="ORF">SPAC1F5.10</name>
</gene>